<protein>
    <recommendedName>
        <fullName>Phospho-2-dehydro-3-deoxyheptonate aldolase</fullName>
        <ecNumber>2.5.1.54</ecNumber>
    </recommendedName>
    <alternativeName>
        <fullName>3-deoxy-D-arabino-heptulosonate 7-phosphate synthase</fullName>
    </alternativeName>
    <alternativeName>
        <fullName>DAHP synthase</fullName>
    </alternativeName>
    <alternativeName>
        <fullName>Phospho-2-keto-3-deoxyheptonate aldolase</fullName>
    </alternativeName>
</protein>
<proteinExistence type="inferred from homology"/>
<sequence length="146" mass="16589">LQYIERLDPEREPGRLTFIVRMGADKIRDKLPELVERSPPPATVAWITDPMHGNTYEAAPVHKTRRFDDVLDEVKGFFEVHKSLGTHPGGIHVELTGDDVTECVGGGDEIFVDDLHQRYETACDPRLNRSQSLDLAFLVAEMYRDQ</sequence>
<evidence type="ECO:0000250" key="1"/>
<evidence type="ECO:0000305" key="2"/>
<reference key="1">
    <citation type="submission" date="1993-05" db="EMBL/GenBank/DDBJ databases">
        <authorList>
            <person name="Liaw L.L."/>
            <person name="Su M.H."/>
            <person name="Lee Y.H.W."/>
        </authorList>
    </citation>
    <scope>NUCLEOTIDE SEQUENCE [GENOMIC DNA]</scope>
    <source>
        <strain>TK64</strain>
    </source>
</reference>
<reference key="2">
    <citation type="journal article" date="1996" name="Microbiology">
        <title>Evidence for a novel class of microbial 3-deoxy-D-arabino-heptulosonate-7-phosphate synthase in Streptomyces coelicolor A3(2), Streptomyces rimosus and Neurospora crassa.</title>
        <authorList>
            <person name="Walker G.E."/>
            <person name="Dunbar B."/>
            <person name="Hunter I.S."/>
            <person name="Nimmo H.G."/>
            <person name="Coggins J.R."/>
        </authorList>
    </citation>
    <scope>IDENTIFICATION</scope>
    <scope>CONCEPTUAL TRANSLATION</scope>
</reference>
<keyword id="KW-0028">Amino-acid biosynthesis</keyword>
<keyword id="KW-0057">Aromatic amino acid biosynthesis</keyword>
<keyword id="KW-0808">Transferase</keyword>
<organism>
    <name type="scientific">Streptomyces lividans</name>
    <dbReference type="NCBI Taxonomy" id="1916"/>
    <lineage>
        <taxon>Bacteria</taxon>
        <taxon>Bacillati</taxon>
        <taxon>Actinomycetota</taxon>
        <taxon>Actinomycetes</taxon>
        <taxon>Kitasatosporales</taxon>
        <taxon>Streptomycetaceae</taxon>
        <taxon>Streptomyces</taxon>
    </lineage>
</organism>
<feature type="chain" id="PRO_0000140856" description="Phospho-2-dehydro-3-deoxyheptonate aldolase">
    <location>
        <begin position="1" status="less than"/>
        <end position="146"/>
    </location>
</feature>
<feature type="non-terminal residue">
    <location>
        <position position="1"/>
    </location>
</feature>
<name>AROF_STRLI</name>
<dbReference type="EC" id="2.5.1.54"/>
<dbReference type="EMBL" id="L13767">
    <property type="status" value="NOT_ANNOTATED_CDS"/>
    <property type="molecule type" value="Genomic_DNA"/>
</dbReference>
<dbReference type="SMR" id="P55911"/>
<dbReference type="UniPathway" id="UPA00053">
    <property type="reaction ID" value="UER00084"/>
</dbReference>
<dbReference type="GO" id="GO:0003849">
    <property type="term" value="F:3-deoxy-7-phosphoheptulonate synthase activity"/>
    <property type="evidence" value="ECO:0007669"/>
    <property type="project" value="UniProtKB-EC"/>
</dbReference>
<dbReference type="GO" id="GO:0008652">
    <property type="term" value="P:amino acid biosynthetic process"/>
    <property type="evidence" value="ECO:0007669"/>
    <property type="project" value="UniProtKB-KW"/>
</dbReference>
<dbReference type="GO" id="GO:0009073">
    <property type="term" value="P:aromatic amino acid family biosynthetic process"/>
    <property type="evidence" value="ECO:0007669"/>
    <property type="project" value="UniProtKB-KW"/>
</dbReference>
<dbReference type="GO" id="GO:0009423">
    <property type="term" value="P:chorismate biosynthetic process"/>
    <property type="evidence" value="ECO:0007669"/>
    <property type="project" value="UniProtKB-UniPathway"/>
</dbReference>
<dbReference type="Gene3D" id="3.20.20.70">
    <property type="entry name" value="Aldolase class I"/>
    <property type="match status" value="1"/>
</dbReference>
<dbReference type="InterPro" id="IPR013785">
    <property type="entry name" value="Aldolase_TIM"/>
</dbReference>
<dbReference type="InterPro" id="IPR002480">
    <property type="entry name" value="DAHP_synth_2"/>
</dbReference>
<dbReference type="PANTHER" id="PTHR21337:SF0">
    <property type="entry name" value="PHOSPHO-2-DEHYDRO-3-DEOXYHEPTONATE ALDOLASE"/>
    <property type="match status" value="1"/>
</dbReference>
<dbReference type="PANTHER" id="PTHR21337">
    <property type="entry name" value="PHOSPHO-2-DEHYDRO-3-DEOXYHEPTONATE ALDOLASE 1, 2"/>
    <property type="match status" value="1"/>
</dbReference>
<dbReference type="Pfam" id="PF01474">
    <property type="entry name" value="DAHP_synth_2"/>
    <property type="match status" value="1"/>
</dbReference>
<dbReference type="SUPFAM" id="SSF51569">
    <property type="entry name" value="Aldolase"/>
    <property type="match status" value="1"/>
</dbReference>
<comment type="catalytic activity">
    <reaction>
        <text>D-erythrose 4-phosphate + phosphoenolpyruvate + H2O = 7-phospho-2-dehydro-3-deoxy-D-arabino-heptonate + phosphate</text>
        <dbReference type="Rhea" id="RHEA:14717"/>
        <dbReference type="ChEBI" id="CHEBI:15377"/>
        <dbReference type="ChEBI" id="CHEBI:16897"/>
        <dbReference type="ChEBI" id="CHEBI:43474"/>
        <dbReference type="ChEBI" id="CHEBI:58394"/>
        <dbReference type="ChEBI" id="CHEBI:58702"/>
        <dbReference type="EC" id="2.5.1.54"/>
    </reaction>
</comment>
<comment type="pathway">
    <text>Metabolic intermediate biosynthesis; chorismate biosynthesis; chorismate from D-erythrose 4-phosphate and phosphoenolpyruvate: step 1/7.</text>
</comment>
<comment type="subunit">
    <text evidence="1">Homodimer.</text>
</comment>
<comment type="similarity">
    <text evidence="2">Belongs to the class-II DAHP synthase family.</text>
</comment>
<comment type="sequence caution" evidence="2">
    <conflict type="frameshift">
        <sequence resource="EMBL" id="L13767"/>
    </conflict>
</comment>
<accession>P55911</accession>